<name>LEPA_ASPFN</name>
<organism>
    <name type="scientific">Aspergillus flavus (strain ATCC 200026 / FGSC A1120 / IAM 13836 / NRRL 3357 / JCM 12722 / SRRC 167)</name>
    <dbReference type="NCBI Taxonomy" id="332952"/>
    <lineage>
        <taxon>Eukaryota</taxon>
        <taxon>Fungi</taxon>
        <taxon>Dikarya</taxon>
        <taxon>Ascomycota</taxon>
        <taxon>Pezizomycotina</taxon>
        <taxon>Eurotiomycetes</taxon>
        <taxon>Eurotiomycetidae</taxon>
        <taxon>Eurotiales</taxon>
        <taxon>Aspergillaceae</taxon>
        <taxon>Aspergillus</taxon>
        <taxon>Aspergillus subgen. Circumdati</taxon>
    </lineage>
</organism>
<sequence length="3946" mass="432583">MGSLSDVRVEPIAIVGSACRFPGGANSPSKLWDLLHSPRDVLMDFPPSRLRLSNFYHKDGEHHGSTNVINKSYLLAEDPNVFDAAFFNINGLEAQAMDPQHRILLETVYEALERGGCSLDDIQGTKTSVFVGVMNADYYDIQLRDSETMARYNATGTARSIISNRISYFFDLKGASMTIDTACSSSLVALHQAVLSLQNREAEASIVAGANLLLDPTMYIAESNLHMLSPEARSRMWDKDANGYARGEGFAAVYLKPLSAALRDGDEIECIIRGTGVNSDGRTKGITMPSSVAQTELIRDTYRRAGLDPSVDRPQFVECHGTGTAAGDPVEARAVHDAFFPPSSKRDNERPLYAGSIKTIIGHLEGCAGLAGVLKASLALQNRIIPPNMHFNDLSPSVKPFYGMIQIPKQPMPWPESTTFRASVNSFGFGGTNAHVILEGYYKGGECLNGGCQQARLDSFVGPMLFSGNTQTTLRAMIKEYFDYLSANPSLDLEGLARALADRRSMFPVRAFFSGSNREALLKYMGQALISSEGSDIGTRSLASSDTPGLLGIFTGQGAQWATMGKALIHSCLLFRVSIENCEESLSTLPDPPSWSLMQELLADDKESRIGQAAFSQPLCTALQIALVDLCSASAITFDAVVGHSSGEIAAAYAAGILSAKDAIRIAYYRGLYAKLASGPDGQPGAMMAVGLSMEGAMSFIAECGLYGKVCLAASNSPSSVTLSGDKDAILQAKGFLDERKVFARQLQVDTAYHSHHMLSCADAYLKSLEACNIKPSLPRAGCVWVSSVRGDIEILEKGDFTSLNSQYWVDNMVKPVLFSQAVECSLWAGGPFDMVLELGPHPALKGPATQTLKSALGTSLPYAGIMRRATNEVEAFSGAIGYVWSHLTDYHIDFASYRESFFKEADRAPATLKDLPSYPWQHDKAYWKESRISRQFRLRHSPLHELLGRRAPDDSDSEMRWRNVLRLSELEWIRGHEFQGQALFPAMGYIAMALEAVTIATKGQQISLVDIEDFHVLQAVVLEEEHPGVEIVFSLKQTGDCKWDFNCYTCSDEWKDLTKTSTGRLILFKGEGSASELPSRPKKRANLSPLDREMFYRKLSSLGLSYHGLFKPQSSFQRSQSYATGSASWPLDQLGQEYVVHPAVMDVALHSIFVAFASPVSHELWATYLPVAIDRLSFNPNISLYGTDGALTIEIDTFITESSSSTMKGDVYLLSPDATPSILIEGVRLQSFTEAKALNDRLLFSKIVWGADIAHGFSSHAVECANKDQFELCDAMERTSLFFLQRAFAELAPCEIEQSEPQFRHLHTAFLKVIEQIKGGLHKSIHSEWLGDSWNDVNSLRRSFESSIDLEMMHAIGQSLPDVIRGRRPLLEVMMRDNLLNRFYTDGRLFVPLNLYVAKTVKAMIHKNPHMKILEIGAGTGATTKAILDTIGDTFDSYTYTDISPGFFAQAQERFALHRQQMRFQTLDIERDTVEQGFERHSYDLVVAANVLHATSHLQETMGHVRSLLRPGGYLLIVEVTGETLQLMYVMGGFPGWWLGVDDGRTDGPGIPAVQWEGLLQMTGFSGIEATVSDLPSDGKHSCSALVSQAIDDKLELFRDPLPRVGDVPIRDPILILGGGTLPVAKLVTGVRKLLRPFRWNIQHAPSVDHLTVPLEGSRSVICLSELDNPLLSEPLTDTRLSKLQAVLGSATNVLWITRDRLTDYPHSNMINGLGRTLQFELPDINIQFLDIRSGISIGADQVVTKFLQLCLVNSPEYLQDDVPWKIEPELSFDGEEWQIPRIIPYKALNDRYNATRRQIMKPLDASRQPVELACFDGRIIIREGKRVTGTSTGSVRLRTILTTRLVSSRLASFFLCMGVEADNGRTAVAITTRMGSLMDIPSTDAWFLPQRSQCDPALLYFIAGQVLAVALSFASPRSGSVILYEPTEALAEAIILSRSWVQEQPYFITSRSGTLQKGWTYIHPRVSHNIARDVLPGDTAALIDCSDDCPHWAVPTTVGKLIPLASCVVEYLTRTPSTFSSIIEHAYSESLLAALPSTAQLSASILSVEDSAGQSSSLLSYPNIVNFDCNNAVLATVAPLDCTGLFSSAKTYWMIGLNSELGLSICRWMIVQGARHIAITSRSGKVDAPWLDEIQSMNGNIKVYPMDVADREAVHSVHQEILRTMPPIAGVCNGAMVLSDKLFMNMKAEDMNKVLKPKVDGSIYLDELFCTTQLDFFILFSSLASVVGNGGQCNYHAANMFMTSLVSQRRSRGLAASVIDIGLVVDVGYVARAGQSLIDHLVNLFYTPLSESDIHKLFAEAVMASPVDSGLCPDIIMGVEPVHDISASLKKPPWYNNPIFSHLRLGTEASSQDSDQSNSTSASIRDQVSSASSVEEGTDVLLRCFAAKLEAMLSLATNSVNVNMPLLDIGVDSLLAVEIRQWFLTKLYVDIPVLKVLSGDTVVEICAEAIQKFAQMSPSAFQGTSSAASKIKQATASPPEIGREEAQSTSRAGILPTDQDNDNSSDSESQRKSGASSSSGSGTRTPTSIDEYFETNVNMLSRSGPMSYAQSRLWFQQQLVKDPTALNIVVRFDVKGYLDVDRLAAAVTATVNRHDALHSAYFAHLDTQEPLQGVIEAPGDIFQHVKVHDDNAASAIFLEMQNRHWDLERGDVFKVTLLTFPTNVQSLIIAYHHIVLDGFSWHVYLRDLSMSYQQQALPPVGPQALDFALIEAQETKNEEYNAQLEFWREELSPVPETFPLLPFSSSKVRQGMQSFQSTTATRELHFDILARAKAASQRLRVTPFHFHLAIAQVLLYKLTNIGDLCIGVTDVNRTNRKFAETVGFFLNLVPLRLRVKPTDSFTEVLHRTSKKALSAMEHSGVPIDVVLRELNIRRSSGHSPLFQVVFNYRVGDMLQVPFGGGRLELHSSIEARSPYDVVFNVTQCPSGASYLQVTSRDALYAPEVSGVICDMYIRLLEDFAGDTSMQIQDGLLNDKSEPGIGLGPRLEFGWPRTMSELFSQRAATDANSIAVKDCRGAVSYAELQQRVADITQDILGCNPPPNARVAVCIHPSRDTIAAMLATLAAGCVYVPIDITLPEARRRAILDSCRPSVILCDSTSADSIDQFAPQECRKVDLGYSPTRATTTAMPEPVADDPAFLLYSSGSTGIPKGILLPQKGYMNYLASKGHHLCLGREVVLQQSSVGFDMSIAQIGNALAHGGTVVVVPQSVRGDPVATAQLMLQEKVTFMIGTPSEYLMLLQHGGDYLRQYRDWRHACLGGESVTEPLKREFRRLSPNCPNVTDCYGPTEISAATSFNTLDLHRGAANEYSTVGRPIPNSTIYILGANGDIVPPGLVGEICIGGVGVALGYWNLPDLEKQKFIHDPFASSADRRRGWTRLYKTGDRGRLGPDGGLIFMGRLDGDTQIKLRGLRIDLEEVANSLLQVAAGLLSETVVSVRGDPEFLVAHAVPARGQKVTNSDLESFKRSLPLPQYMCPAAIVLLDRLPTTPNGKVDRKALQDKPLPTEPDSSFPTEALSLAEGELRLVWQDVLQQTAQTGRIDSRTDFFMAGGNSLLLVKLQGAIKNAYGLSIALKDLYRCSTLGRMATLIDAEKKNQPIFEKIDWEDETRVPGSLARGQRSREPKKTDLHIALTGSTGFLGMEILKALLEQPTVSKVHCLAVDAQHGQSLPKSHKIVIYPGSLNVSALGLSTREVDFLKSTVDALIHAGANGHCLNNYFSLRMPNLGSTRFLTELALSRGVPLHYVSSNRVTLLSGDVALPPGSMSAFPPPETGSDGFTASKWASERYLENVAEATGLDVCIHRPCALTGDQAPSEDALNAILRFSVLMKVVPQFPNVRGFFDFEKVGVVATNIVKKALQSVQVTRVHATSVASFAHHSSGVKVPIDKIQDRMQDLYGGVFGRLALADWVQRARTLGIEPLVASYLEAMESRGEEMAFPFLGMPSD</sequence>
<feature type="chain" id="PRO_0000438442" description="Hybrid PKS-NRPS synthetase lepA">
    <location>
        <begin position="1"/>
        <end position="3946"/>
    </location>
</feature>
<feature type="domain" description="Ketosynthase family 3 (KS3)" evidence="3 10">
    <location>
        <begin position="9"/>
        <end position="440"/>
    </location>
</feature>
<feature type="domain" description="PKS/mFAS DH" evidence="4">
    <location>
        <begin position="945"/>
        <end position="1239"/>
    </location>
</feature>
<feature type="domain" description="Carrier 1" evidence="2">
    <location>
        <begin position="2378"/>
        <end position="2455"/>
    </location>
</feature>
<feature type="domain" description="Carrier 2" evidence="2">
    <location>
        <begin position="3515"/>
        <end position="3594"/>
    </location>
</feature>
<feature type="region of interest" description="Malonyl-CoA:ACP transacylase (MAT) domain" evidence="1 10">
    <location>
        <begin position="553"/>
        <end position="871"/>
    </location>
</feature>
<feature type="region of interest" description="Dehydratase (DH) domain" evidence="1 10">
    <location>
        <begin position="945"/>
        <end position="1238"/>
    </location>
</feature>
<feature type="region of interest" description="N-terminal hotdog fold" evidence="4">
    <location>
        <begin position="945"/>
        <end position="1073"/>
    </location>
</feature>
<feature type="region of interest" description="C-terminal hotdog fold" evidence="4">
    <location>
        <begin position="1088"/>
        <end position="1239"/>
    </location>
</feature>
<feature type="region of interest" description="Methyltransferase (MT) domain" evidence="1 10">
    <location>
        <begin position="1380"/>
        <end position="1580"/>
    </location>
</feature>
<feature type="region of interest" description="Ketoreductase (KR) domain" evidence="1 10">
    <location>
        <begin position="2093"/>
        <end position="2266"/>
    </location>
</feature>
<feature type="region of interest" description="Disordered" evidence="5">
    <location>
        <begin position="2352"/>
        <end position="2372"/>
    </location>
</feature>
<feature type="region of interest" description="Disordered" evidence="5">
    <location>
        <begin position="2474"/>
        <end position="2531"/>
    </location>
</feature>
<feature type="region of interest" description="Condensation (C) domain" evidence="1 10">
    <location>
        <begin position="2547"/>
        <end position="2976"/>
    </location>
</feature>
<feature type="region of interest" description="Adenylation (A) (KR) domain" evidence="1 10">
    <location>
        <begin position="3000"/>
        <end position="3402"/>
    </location>
</feature>
<feature type="region of interest" description="Disordered" evidence="5">
    <location>
        <begin position="3492"/>
        <end position="3511"/>
    </location>
</feature>
<feature type="region of interest" description="Reductase (RED) domain" evidence="1 10">
    <location>
        <begin position="3633"/>
        <end position="3833"/>
    </location>
</feature>
<feature type="compositionally biased region" description="Low complexity" evidence="5">
    <location>
        <begin position="2352"/>
        <end position="2365"/>
    </location>
</feature>
<feature type="compositionally biased region" description="Low complexity" evidence="5">
    <location>
        <begin position="2508"/>
        <end position="2530"/>
    </location>
</feature>
<feature type="active site" description="For beta-ketoacyl synthase activity" evidence="3">
    <location>
        <position position="183"/>
    </location>
</feature>
<feature type="active site" description="For beta-ketoacyl synthase activity" evidence="3">
    <location>
        <position position="320"/>
    </location>
</feature>
<feature type="active site" description="For beta-ketoacyl synthase activity" evidence="3">
    <location>
        <position position="363"/>
    </location>
</feature>
<feature type="active site" description="Proton acceptor; for dehydratase activity" evidence="4">
    <location>
        <position position="977"/>
    </location>
</feature>
<feature type="active site" description="Proton donor; for dehydratase activity" evidence="4">
    <location>
        <position position="1147"/>
    </location>
</feature>
<feature type="modified residue" description="O-(pantetheine 4'-phosphoryl)serine" evidence="2">
    <location>
        <position position="2415"/>
    </location>
</feature>
<feature type="modified residue" description="O-(pantetheine 4'-phosphoryl)serine" evidence="2">
    <location>
        <position position="3554"/>
    </location>
</feature>
<protein>
    <recommendedName>
        <fullName evidence="7">Hybrid PKS-NRPS synthetase lepA</fullName>
        <ecNumber evidence="10">2.3.1.-</ecNumber>
        <ecNumber evidence="10">6.3.2.-</ecNumber>
    </recommendedName>
    <alternativeName>
        <fullName evidence="7">Leporins biosynthesis protein A</fullName>
    </alternativeName>
</protein>
<evidence type="ECO:0000255" key="1"/>
<evidence type="ECO:0000255" key="2">
    <source>
        <dbReference type="PROSITE-ProRule" id="PRU00258"/>
    </source>
</evidence>
<evidence type="ECO:0000255" key="3">
    <source>
        <dbReference type="PROSITE-ProRule" id="PRU01348"/>
    </source>
</evidence>
<evidence type="ECO:0000255" key="4">
    <source>
        <dbReference type="PROSITE-ProRule" id="PRU01363"/>
    </source>
</evidence>
<evidence type="ECO:0000256" key="5">
    <source>
        <dbReference type="SAM" id="MobiDB-lite"/>
    </source>
</evidence>
<evidence type="ECO:0000269" key="6">
    <source>
    </source>
</evidence>
<evidence type="ECO:0000303" key="7">
    <source>
    </source>
</evidence>
<evidence type="ECO:0000305" key="8"/>
<evidence type="ECO:0000305" key="9">
    <source>
    </source>
</evidence>
<evidence type="ECO:0000305" key="10">
    <source>
    </source>
</evidence>
<keyword id="KW-0436">Ligase</keyword>
<keyword id="KW-0489">Methyltransferase</keyword>
<keyword id="KW-0511">Multifunctional enzyme</keyword>
<keyword id="KW-0560">Oxidoreductase</keyword>
<keyword id="KW-0596">Phosphopantetheine</keyword>
<keyword id="KW-0597">Phosphoprotein</keyword>
<keyword id="KW-0677">Repeat</keyword>
<keyword id="KW-0808">Transferase</keyword>
<reference key="1">
    <citation type="journal article" date="2015" name="Genome Announc.">
        <title>Genome sequence of Aspergillus flavus NRRL 3357, a strain that causes aflatoxin contamination of food and feed.</title>
        <authorList>
            <person name="Nierman W.C."/>
            <person name="Yu J."/>
            <person name="Fedorova-Abrams N.D."/>
            <person name="Losada L."/>
            <person name="Cleveland T.E."/>
            <person name="Bhatnagar D."/>
            <person name="Bennett J.W."/>
            <person name="Dean R."/>
            <person name="Payne G.A."/>
        </authorList>
    </citation>
    <scope>NUCLEOTIDE SEQUENCE [LARGE SCALE GENOMIC DNA]</scope>
    <source>
        <strain>ATCC 200026 / FGSC A1120 / IAM 13836 / NRRL 3357 / JCM 12722 / SRRC 167</strain>
    </source>
</reference>
<reference key="2">
    <citation type="journal article" date="2010" name="Mol. Plant Pathol.">
        <title>Beyond aflatoxin: four distinct expression patterns and functional roles associated with Aspergillus flavus secondary metabolism gene clusters.</title>
        <authorList>
            <person name="Georgianna D.R."/>
            <person name="Fedorova N.D."/>
            <person name="Burroughs J.L."/>
            <person name="Dolezal A.L."/>
            <person name="Bok J.W."/>
            <person name="Horowitz-Brown S."/>
            <person name="Woloshuk C.P."/>
            <person name="Yu J."/>
            <person name="Keller N.P."/>
            <person name="Payne G.A."/>
        </authorList>
    </citation>
    <scope>IDENTIFICATION OF THE GENE CLUSTER 23</scope>
    <scope>FUNCTION</scope>
</reference>
<reference key="3">
    <citation type="journal article" date="2015" name="Fungal Genet. Biol.">
        <title>An Aspergillus flavus secondary metabolic gene cluster containing a hybrid PKS-NRPS is necessary for synthesis of the 2-pyridones, leporins.</title>
        <authorList>
            <person name="Cary J.W."/>
            <person name="Uka V."/>
            <person name="Han Z."/>
            <person name="Buyst D."/>
            <person name="Harris-Coward P.Y."/>
            <person name="Ehrlich K.C."/>
            <person name="Wei Q."/>
            <person name="Bhatnagar D."/>
            <person name="Dowd P.F."/>
            <person name="Martens S.L."/>
            <person name="Calvo A.M."/>
            <person name="Martins J.C."/>
            <person name="Vanhaecke L."/>
            <person name="Coenye T."/>
            <person name="De Saeger S."/>
            <person name="Di Mavungu J.D."/>
        </authorList>
    </citation>
    <scope>FUNCTION</scope>
    <scope>DISRUPTION PHENOTYPE</scope>
    <scope>PATHWAY</scope>
</reference>
<comment type="function">
    <text evidence="6 9">Hybrid PKS-NRPS synthetase; part of the gene cluster 23 that mediates the biosynthesis of a family of 2-pyridones known as leporins (PubMed:20447271, PubMed:26051490). The hybrid PKS-NRPS synthetase lepA and the enoyl reductase lepG are responsible for fusion of phenylalanine with a hexaketide and subsequent release of the stable tetramic acid precursor, pre-leporin C (PubMed:26051490). Because lepA lacks a designated enoylreductase (ER) domain, the required activity is provided the enoyl reductase lepG (PubMed:26051490). It is possible that the dehydrogenase lepF also participates in production of pre-leporin C (PubMed:26051490). Cytochrome P450 monooxygenase lepH is then required for the ring expansion step to yield leporin C (PubMed:26051490). Leporin C is then presumably further oxidized by the N-hydroxylase lepD to form leporin B (PubMed:26051490). LepI may possess a function in biosynthesis upstream of lepA (PubMed:26051490). Leporin B is further oxidized in the presence of ferric ion to give the leporin B trimer-iron chelate, but whether or not this reaction is catalyzed by an enzyme in the pathway or by ferric ion is not determined yet (PubMed:26051490).</text>
</comment>
<comment type="disruption phenotype">
    <text evidence="6">Impairs the production od leporins B and C or any other potential open ring 2-pyridone (PubMed:26051490).</text>
</comment>
<comment type="similarity">
    <text evidence="8">In the C-terminal section; belongs to the NRP synthetase family.</text>
</comment>
<accession>B8NJG3</accession>
<gene>
    <name evidence="7" type="primary">lepA</name>
    <name type="ORF">AFLA_066840</name>
</gene>
<proteinExistence type="inferred from homology"/>
<dbReference type="EC" id="2.3.1.-" evidence="10"/>
<dbReference type="EC" id="6.3.2.-" evidence="10"/>
<dbReference type="EMBL" id="EQ963479">
    <property type="protein sequence ID" value="EED49862.1"/>
    <property type="molecule type" value="Genomic_DNA"/>
</dbReference>
<dbReference type="RefSeq" id="XP_002380243.1">
    <property type="nucleotide sequence ID" value="XM_002380202.1"/>
</dbReference>
<dbReference type="SMR" id="B8NJG3"/>
<dbReference type="STRING" id="332952.B8NJG3"/>
<dbReference type="EnsemblFungi" id="EED49862">
    <property type="protein sequence ID" value="EED49862"/>
    <property type="gene ID" value="AFLA_066840"/>
</dbReference>
<dbReference type="VEuPathDB" id="FungiDB:AFLA_008622"/>
<dbReference type="eggNOG" id="KOG1178">
    <property type="taxonomic scope" value="Eukaryota"/>
</dbReference>
<dbReference type="eggNOG" id="KOG1202">
    <property type="taxonomic scope" value="Eukaryota"/>
</dbReference>
<dbReference type="HOGENOM" id="CLU_000022_37_4_1"/>
<dbReference type="OMA" id="ETDVHHA"/>
<dbReference type="BioCyc" id="MetaCyc:MONOMER-22097"/>
<dbReference type="GO" id="GO:0004312">
    <property type="term" value="F:fatty acid synthase activity"/>
    <property type="evidence" value="ECO:0007669"/>
    <property type="project" value="TreeGrafter"/>
</dbReference>
<dbReference type="GO" id="GO:0016874">
    <property type="term" value="F:ligase activity"/>
    <property type="evidence" value="ECO:0007669"/>
    <property type="project" value="UniProtKB-KW"/>
</dbReference>
<dbReference type="GO" id="GO:0008168">
    <property type="term" value="F:methyltransferase activity"/>
    <property type="evidence" value="ECO:0007669"/>
    <property type="project" value="UniProtKB-KW"/>
</dbReference>
<dbReference type="GO" id="GO:0016491">
    <property type="term" value="F:oxidoreductase activity"/>
    <property type="evidence" value="ECO:0007669"/>
    <property type="project" value="UniProtKB-KW"/>
</dbReference>
<dbReference type="GO" id="GO:0031177">
    <property type="term" value="F:phosphopantetheine binding"/>
    <property type="evidence" value="ECO:0007669"/>
    <property type="project" value="InterPro"/>
</dbReference>
<dbReference type="GO" id="GO:0006633">
    <property type="term" value="P:fatty acid biosynthetic process"/>
    <property type="evidence" value="ECO:0007669"/>
    <property type="project" value="TreeGrafter"/>
</dbReference>
<dbReference type="GO" id="GO:0032259">
    <property type="term" value="P:methylation"/>
    <property type="evidence" value="ECO:0007669"/>
    <property type="project" value="UniProtKB-KW"/>
</dbReference>
<dbReference type="GO" id="GO:0009403">
    <property type="term" value="P:toxin biosynthetic process"/>
    <property type="evidence" value="ECO:0007669"/>
    <property type="project" value="UniProtKB-ARBA"/>
</dbReference>
<dbReference type="CDD" id="cd05930">
    <property type="entry name" value="A_NRPS"/>
    <property type="match status" value="1"/>
</dbReference>
<dbReference type="CDD" id="cd02440">
    <property type="entry name" value="AdoMet_MTases"/>
    <property type="match status" value="1"/>
</dbReference>
<dbReference type="CDD" id="cd19532">
    <property type="entry name" value="C_PKS-NRPS"/>
    <property type="match status" value="1"/>
</dbReference>
<dbReference type="CDD" id="cd00833">
    <property type="entry name" value="PKS"/>
    <property type="match status" value="1"/>
</dbReference>
<dbReference type="Gene3D" id="3.30.300.30">
    <property type="match status" value="1"/>
</dbReference>
<dbReference type="Gene3D" id="3.30.70.3290">
    <property type="match status" value="1"/>
</dbReference>
<dbReference type="Gene3D" id="3.40.47.10">
    <property type="match status" value="1"/>
</dbReference>
<dbReference type="Gene3D" id="1.10.1200.10">
    <property type="entry name" value="ACP-like"/>
    <property type="match status" value="1"/>
</dbReference>
<dbReference type="Gene3D" id="3.30.559.10">
    <property type="entry name" value="Chloramphenicol acetyltransferase-like domain"/>
    <property type="match status" value="1"/>
</dbReference>
<dbReference type="Gene3D" id="3.40.366.10">
    <property type="entry name" value="Malonyl-Coenzyme A Acyl Carrier Protein, domain 2"/>
    <property type="match status" value="1"/>
</dbReference>
<dbReference type="Gene3D" id="3.40.50.12780">
    <property type="entry name" value="N-terminal domain of ligase-like"/>
    <property type="match status" value="1"/>
</dbReference>
<dbReference type="Gene3D" id="3.40.50.720">
    <property type="entry name" value="NAD(P)-binding Rossmann-like Domain"/>
    <property type="match status" value="2"/>
</dbReference>
<dbReference type="Gene3D" id="3.30.559.30">
    <property type="entry name" value="Nonribosomal peptide synthetase, condensation domain"/>
    <property type="match status" value="1"/>
</dbReference>
<dbReference type="Gene3D" id="3.10.129.110">
    <property type="entry name" value="Polyketide synthase dehydratase"/>
    <property type="match status" value="1"/>
</dbReference>
<dbReference type="Gene3D" id="3.40.50.150">
    <property type="entry name" value="Vaccinia Virus protein VP39"/>
    <property type="match status" value="1"/>
</dbReference>
<dbReference type="InterPro" id="IPR010071">
    <property type="entry name" value="AA_adenyl_dom"/>
</dbReference>
<dbReference type="InterPro" id="IPR001227">
    <property type="entry name" value="Ac_transferase_dom_sf"/>
</dbReference>
<dbReference type="InterPro" id="IPR036736">
    <property type="entry name" value="ACP-like_sf"/>
</dbReference>
<dbReference type="InterPro" id="IPR014043">
    <property type="entry name" value="Acyl_transferase_dom"/>
</dbReference>
<dbReference type="InterPro" id="IPR016035">
    <property type="entry name" value="Acyl_Trfase/lysoPLipase"/>
</dbReference>
<dbReference type="InterPro" id="IPR045851">
    <property type="entry name" value="AMP-bd_C_sf"/>
</dbReference>
<dbReference type="InterPro" id="IPR020845">
    <property type="entry name" value="AMP-binding_CS"/>
</dbReference>
<dbReference type="InterPro" id="IPR000873">
    <property type="entry name" value="AMP-dep_synth/lig_dom"/>
</dbReference>
<dbReference type="InterPro" id="IPR042099">
    <property type="entry name" value="ANL_N_sf"/>
</dbReference>
<dbReference type="InterPro" id="IPR023213">
    <property type="entry name" value="CAT-like_dom_sf"/>
</dbReference>
<dbReference type="InterPro" id="IPR001242">
    <property type="entry name" value="Condensatn"/>
</dbReference>
<dbReference type="InterPro" id="IPR013120">
    <property type="entry name" value="Far_NAD-bd"/>
</dbReference>
<dbReference type="InterPro" id="IPR014031">
    <property type="entry name" value="Ketoacyl_synth_C"/>
</dbReference>
<dbReference type="InterPro" id="IPR014030">
    <property type="entry name" value="Ketoacyl_synth_N"/>
</dbReference>
<dbReference type="InterPro" id="IPR016036">
    <property type="entry name" value="Malonyl_transacylase_ACP-bd"/>
</dbReference>
<dbReference type="InterPro" id="IPR013217">
    <property type="entry name" value="Methyltransf_12"/>
</dbReference>
<dbReference type="InterPro" id="IPR036291">
    <property type="entry name" value="NAD(P)-bd_dom_sf"/>
</dbReference>
<dbReference type="InterPro" id="IPR032821">
    <property type="entry name" value="PKS_assoc"/>
</dbReference>
<dbReference type="InterPro" id="IPR020841">
    <property type="entry name" value="PKS_Beta-ketoAc_synthase_dom"/>
</dbReference>
<dbReference type="InterPro" id="IPR042104">
    <property type="entry name" value="PKS_dehydratase_sf"/>
</dbReference>
<dbReference type="InterPro" id="IPR020807">
    <property type="entry name" value="PKS_DH"/>
</dbReference>
<dbReference type="InterPro" id="IPR049551">
    <property type="entry name" value="PKS_DH_C"/>
</dbReference>
<dbReference type="InterPro" id="IPR049552">
    <property type="entry name" value="PKS_DH_N"/>
</dbReference>
<dbReference type="InterPro" id="IPR013968">
    <property type="entry name" value="PKS_KR"/>
</dbReference>
<dbReference type="InterPro" id="IPR049900">
    <property type="entry name" value="PKS_mFAS_DH"/>
</dbReference>
<dbReference type="InterPro" id="IPR050091">
    <property type="entry name" value="PKS_NRPS_Biosynth_Enz"/>
</dbReference>
<dbReference type="InterPro" id="IPR020806">
    <property type="entry name" value="PKS_PP-bd"/>
</dbReference>
<dbReference type="InterPro" id="IPR009081">
    <property type="entry name" value="PP-bd_ACP"/>
</dbReference>
<dbReference type="InterPro" id="IPR006162">
    <property type="entry name" value="Ppantetheine_attach_site"/>
</dbReference>
<dbReference type="InterPro" id="IPR029063">
    <property type="entry name" value="SAM-dependent_MTases_sf"/>
</dbReference>
<dbReference type="InterPro" id="IPR016039">
    <property type="entry name" value="Thiolase-like"/>
</dbReference>
<dbReference type="NCBIfam" id="TIGR01733">
    <property type="entry name" value="AA-adenyl-dom"/>
    <property type="match status" value="1"/>
</dbReference>
<dbReference type="PANTHER" id="PTHR43775">
    <property type="entry name" value="FATTY ACID SYNTHASE"/>
    <property type="match status" value="1"/>
</dbReference>
<dbReference type="PANTHER" id="PTHR43775:SF20">
    <property type="entry name" value="HYBRID PKS-NRPS SYNTHETASE APDA"/>
    <property type="match status" value="1"/>
</dbReference>
<dbReference type="Pfam" id="PF23297">
    <property type="entry name" value="ACP_SdgA_C"/>
    <property type="match status" value="1"/>
</dbReference>
<dbReference type="Pfam" id="PF00698">
    <property type="entry name" value="Acyl_transf_1"/>
    <property type="match status" value="1"/>
</dbReference>
<dbReference type="Pfam" id="PF00501">
    <property type="entry name" value="AMP-binding"/>
    <property type="match status" value="1"/>
</dbReference>
<dbReference type="Pfam" id="PF00668">
    <property type="entry name" value="Condensation"/>
    <property type="match status" value="1"/>
</dbReference>
<dbReference type="Pfam" id="PF16197">
    <property type="entry name" value="KAsynt_C_assoc"/>
    <property type="match status" value="1"/>
</dbReference>
<dbReference type="Pfam" id="PF00109">
    <property type="entry name" value="ketoacyl-synt"/>
    <property type="match status" value="1"/>
</dbReference>
<dbReference type="Pfam" id="PF02801">
    <property type="entry name" value="Ketoacyl-synt_C"/>
    <property type="match status" value="1"/>
</dbReference>
<dbReference type="Pfam" id="PF08659">
    <property type="entry name" value="KR"/>
    <property type="match status" value="1"/>
</dbReference>
<dbReference type="Pfam" id="PF08242">
    <property type="entry name" value="Methyltransf_12"/>
    <property type="match status" value="1"/>
</dbReference>
<dbReference type="Pfam" id="PF07993">
    <property type="entry name" value="NAD_binding_4"/>
    <property type="match status" value="1"/>
</dbReference>
<dbReference type="Pfam" id="PF21089">
    <property type="entry name" value="PKS_DH_N"/>
    <property type="match status" value="1"/>
</dbReference>
<dbReference type="Pfam" id="PF00550">
    <property type="entry name" value="PP-binding"/>
    <property type="match status" value="1"/>
</dbReference>
<dbReference type="Pfam" id="PF14765">
    <property type="entry name" value="PS-DH"/>
    <property type="match status" value="1"/>
</dbReference>
<dbReference type="SMART" id="SM00827">
    <property type="entry name" value="PKS_AT"/>
    <property type="match status" value="1"/>
</dbReference>
<dbReference type="SMART" id="SM00826">
    <property type="entry name" value="PKS_DH"/>
    <property type="match status" value="1"/>
</dbReference>
<dbReference type="SMART" id="SM00822">
    <property type="entry name" value="PKS_KR"/>
    <property type="match status" value="1"/>
</dbReference>
<dbReference type="SMART" id="SM00825">
    <property type="entry name" value="PKS_KS"/>
    <property type="match status" value="1"/>
</dbReference>
<dbReference type="SMART" id="SM00823">
    <property type="entry name" value="PKS_PP"/>
    <property type="match status" value="2"/>
</dbReference>
<dbReference type="SUPFAM" id="SSF56801">
    <property type="entry name" value="Acetyl-CoA synthetase-like"/>
    <property type="match status" value="1"/>
</dbReference>
<dbReference type="SUPFAM" id="SSF47336">
    <property type="entry name" value="ACP-like"/>
    <property type="match status" value="2"/>
</dbReference>
<dbReference type="SUPFAM" id="SSF52777">
    <property type="entry name" value="CoA-dependent acyltransferases"/>
    <property type="match status" value="2"/>
</dbReference>
<dbReference type="SUPFAM" id="SSF52151">
    <property type="entry name" value="FabD/lysophospholipase-like"/>
    <property type="match status" value="1"/>
</dbReference>
<dbReference type="SUPFAM" id="SSF51735">
    <property type="entry name" value="NAD(P)-binding Rossmann-fold domains"/>
    <property type="match status" value="2"/>
</dbReference>
<dbReference type="SUPFAM" id="SSF55048">
    <property type="entry name" value="Probable ACP-binding domain of malonyl-CoA ACP transacylase"/>
    <property type="match status" value="1"/>
</dbReference>
<dbReference type="SUPFAM" id="SSF53335">
    <property type="entry name" value="S-adenosyl-L-methionine-dependent methyltransferases"/>
    <property type="match status" value="1"/>
</dbReference>
<dbReference type="SUPFAM" id="SSF53901">
    <property type="entry name" value="Thiolase-like"/>
    <property type="match status" value="1"/>
</dbReference>
<dbReference type="PROSITE" id="PS00455">
    <property type="entry name" value="AMP_BINDING"/>
    <property type="match status" value="1"/>
</dbReference>
<dbReference type="PROSITE" id="PS50075">
    <property type="entry name" value="CARRIER"/>
    <property type="match status" value="2"/>
</dbReference>
<dbReference type="PROSITE" id="PS52004">
    <property type="entry name" value="KS3_2"/>
    <property type="match status" value="1"/>
</dbReference>
<dbReference type="PROSITE" id="PS00012">
    <property type="entry name" value="PHOSPHOPANTETHEINE"/>
    <property type="match status" value="1"/>
</dbReference>
<dbReference type="PROSITE" id="PS52019">
    <property type="entry name" value="PKS_MFAS_DH"/>
    <property type="match status" value="1"/>
</dbReference>